<geneLocation type="chloroplast"/>
<gene>
    <name evidence="1" type="primary">psbB</name>
</gene>
<sequence>MGLPWYRVHTVVLNDPGRLIAVHLMHTALVAGWAGSMALYELAVFDPSDPVLNPMWRQGMFVMPFMARLGVTDSWGGWSITGESVSNPGLWSLEGVALTHIVLSGMLFLAAIWHWVYWDLELFRDPRTGEPALDLPKIFGIHLLLSSLLCFGFGAFHVTGLFGPGMWVSDGYGVTGKVLPVAPAWGPEGFNPFNPGGVASHHIAAGTVGILAGVFHLTVRPPQRLYRALRMGNIETVLSSSISAVFFSAFITCGTMWYGSATTPIELFGPTRYQWDSGYFQQEIEKRVENAIADGAAPSEAWSRIPDKLAFYDYIGNNPAKGGLFRAGPMNKGDGVAEAWLGHPVFQDKEGRELSVRRMPAFFETFPVILVDKDGIIRADIPFRRAESKYSIEQVGVTASFYGGKLNGQVFNDAPSVKKYARKAQLGEVFEFDRTTLESDGVFRSSPRGWFTFGHANFALIFFFGHLWHGSRTIFRDVFAGIGAEVTEQVEFGAFQKLGDRSSKKQGAV</sequence>
<feature type="chain" id="PRO_0000077496" description="Photosystem II CP47 reaction center protein">
    <location>
        <begin position="1"/>
        <end position="509"/>
    </location>
</feature>
<feature type="transmembrane region" description="Helical" evidence="1">
    <location>
        <begin position="21"/>
        <end position="36"/>
    </location>
</feature>
<feature type="transmembrane region" description="Helical" evidence="1">
    <location>
        <begin position="101"/>
        <end position="115"/>
    </location>
</feature>
<feature type="transmembrane region" description="Helical" evidence="1">
    <location>
        <begin position="140"/>
        <end position="156"/>
    </location>
</feature>
<feature type="transmembrane region" description="Helical" evidence="1">
    <location>
        <begin position="203"/>
        <end position="218"/>
    </location>
</feature>
<feature type="transmembrane region" description="Helical" evidence="1">
    <location>
        <begin position="237"/>
        <end position="252"/>
    </location>
</feature>
<feature type="transmembrane region" description="Helical" evidence="1">
    <location>
        <begin position="457"/>
        <end position="472"/>
    </location>
</feature>
<comment type="function">
    <text evidence="1">One of the components of the core complex of photosystem II (PSII). It binds chlorophyll and helps catalyze the primary light-induced photochemical processes of PSII. PSII is a light-driven water:plastoquinone oxidoreductase, using light energy to abstract electrons from H(2)O, generating O(2) and a proton gradient subsequently used for ATP formation.</text>
</comment>
<comment type="cofactor">
    <text evidence="1">Binds multiple chlorophylls. PSII binds additional chlorophylls, carotenoids and specific lipids.</text>
</comment>
<comment type="subunit">
    <text evidence="1">PSII is composed of 1 copy each of membrane proteins PsbA, PsbB, PsbC, PsbD, PsbE, PsbF, PsbH, PsbI, PsbJ, PsbK, PsbL, PsbM, PsbT, PsbX, PsbY, PsbZ, Psb30/Ycf12, at least 3 peripheral proteins of the oxygen-evolving complex and a large number of cofactors. It forms dimeric complexes.</text>
</comment>
<comment type="subcellular location">
    <subcellularLocation>
        <location evidence="1">Plastid</location>
        <location evidence="1">Chloroplast thylakoid membrane</location>
        <topology evidence="1">Multi-pass membrane protein</topology>
    </subcellularLocation>
</comment>
<comment type="similarity">
    <text evidence="1">Belongs to the PsbB/PsbC family. PsbB subfamily.</text>
</comment>
<accession>P51322</accession>
<reference key="1">
    <citation type="journal article" date="1995" name="Plant Mol. Biol. Rep.">
        <title>Complete nucleotide sequence of the Porphyra purpurea chloroplast genome.</title>
        <authorList>
            <person name="Reith M.E."/>
            <person name="Munholland J."/>
        </authorList>
    </citation>
    <scope>NUCLEOTIDE SEQUENCE [LARGE SCALE GENOMIC DNA]</scope>
    <source>
        <strain>Avonport</strain>
    </source>
</reference>
<organism>
    <name type="scientific">Porphyra purpurea</name>
    <name type="common">Red seaweed</name>
    <name type="synonym">Ulva purpurea</name>
    <dbReference type="NCBI Taxonomy" id="2787"/>
    <lineage>
        <taxon>Eukaryota</taxon>
        <taxon>Rhodophyta</taxon>
        <taxon>Bangiophyceae</taxon>
        <taxon>Bangiales</taxon>
        <taxon>Bangiaceae</taxon>
        <taxon>Porphyra</taxon>
    </lineage>
</organism>
<name>PSBB_PORPU</name>
<keyword id="KW-0148">Chlorophyll</keyword>
<keyword id="KW-0150">Chloroplast</keyword>
<keyword id="KW-0157">Chromophore</keyword>
<keyword id="KW-0472">Membrane</keyword>
<keyword id="KW-0602">Photosynthesis</keyword>
<keyword id="KW-0604">Photosystem II</keyword>
<keyword id="KW-0934">Plastid</keyword>
<keyword id="KW-0793">Thylakoid</keyword>
<keyword id="KW-0812">Transmembrane</keyword>
<keyword id="KW-1133">Transmembrane helix</keyword>
<protein>
    <recommendedName>
        <fullName evidence="1">Photosystem II CP47 reaction center protein</fullName>
    </recommendedName>
    <alternativeName>
        <fullName evidence="1">PSII 47 kDa protein</fullName>
    </alternativeName>
    <alternativeName>
        <fullName evidence="1">Protein CP-47</fullName>
    </alternativeName>
</protein>
<proteinExistence type="inferred from homology"/>
<dbReference type="EMBL" id="U38804">
    <property type="protein sequence ID" value="AAC08208.1"/>
    <property type="molecule type" value="Genomic_DNA"/>
</dbReference>
<dbReference type="PIR" id="S73243">
    <property type="entry name" value="S73243"/>
</dbReference>
<dbReference type="RefSeq" id="NP_053932.1">
    <property type="nucleotide sequence ID" value="NC_000925.1"/>
</dbReference>
<dbReference type="SMR" id="P51322"/>
<dbReference type="GeneID" id="809951"/>
<dbReference type="GO" id="GO:0009535">
    <property type="term" value="C:chloroplast thylakoid membrane"/>
    <property type="evidence" value="ECO:0007669"/>
    <property type="project" value="UniProtKB-SubCell"/>
</dbReference>
<dbReference type="GO" id="GO:0009523">
    <property type="term" value="C:photosystem II"/>
    <property type="evidence" value="ECO:0007669"/>
    <property type="project" value="UniProtKB-KW"/>
</dbReference>
<dbReference type="GO" id="GO:0016168">
    <property type="term" value="F:chlorophyll binding"/>
    <property type="evidence" value="ECO:0007669"/>
    <property type="project" value="UniProtKB-UniRule"/>
</dbReference>
<dbReference type="GO" id="GO:0045156">
    <property type="term" value="F:electron transporter, transferring electrons within the cyclic electron transport pathway of photosynthesis activity"/>
    <property type="evidence" value="ECO:0007669"/>
    <property type="project" value="InterPro"/>
</dbReference>
<dbReference type="GO" id="GO:0009772">
    <property type="term" value="P:photosynthetic electron transport in photosystem II"/>
    <property type="evidence" value="ECO:0007669"/>
    <property type="project" value="InterPro"/>
</dbReference>
<dbReference type="Gene3D" id="3.10.680.10">
    <property type="entry name" value="Photosystem II CP47 reaction center protein"/>
    <property type="match status" value="1"/>
</dbReference>
<dbReference type="HAMAP" id="MF_01495">
    <property type="entry name" value="PSII_PsbB_CP47"/>
    <property type="match status" value="1"/>
</dbReference>
<dbReference type="InterPro" id="IPR000932">
    <property type="entry name" value="PS_antenna-like"/>
</dbReference>
<dbReference type="InterPro" id="IPR036001">
    <property type="entry name" value="PS_II_antenna-like_sf"/>
</dbReference>
<dbReference type="InterPro" id="IPR017486">
    <property type="entry name" value="PSII_PsbB"/>
</dbReference>
<dbReference type="NCBIfam" id="TIGR03039">
    <property type="entry name" value="PS_II_CP47"/>
    <property type="match status" value="1"/>
</dbReference>
<dbReference type="Pfam" id="PF00421">
    <property type="entry name" value="PSII"/>
    <property type="match status" value="1"/>
</dbReference>
<dbReference type="SUPFAM" id="SSF161077">
    <property type="entry name" value="Photosystem II antenna protein-like"/>
    <property type="match status" value="1"/>
</dbReference>
<evidence type="ECO:0000255" key="1">
    <source>
        <dbReference type="HAMAP-Rule" id="MF_01495"/>
    </source>
</evidence>